<keyword id="KW-0009">Actin-binding</keyword>
<keyword id="KW-0963">Cytoplasm</keyword>
<keyword id="KW-0206">Cytoskeleton</keyword>
<keyword id="KW-0488">Methylation</keyword>
<keyword id="KW-1185">Reference proteome</keyword>
<reference key="1">
    <citation type="journal article" date="2004" name="Genome Res.">
        <title>The status, quality, and expansion of the NIH full-length cDNA project: the Mammalian Gene Collection (MGC).</title>
        <authorList>
            <consortium name="The MGC Project Team"/>
        </authorList>
    </citation>
    <scope>NUCLEOTIDE SEQUENCE [LARGE SCALE MRNA]</scope>
    <source>
        <tissue>Eye</tissue>
    </source>
</reference>
<reference key="2">
    <citation type="journal article" date="2010" name="Cell">
        <title>A tissue-specific atlas of mouse protein phosphorylation and expression.</title>
        <authorList>
            <person name="Huttlin E.L."/>
            <person name="Jedrychowski M.P."/>
            <person name="Elias J.E."/>
            <person name="Goswami T."/>
            <person name="Rad R."/>
            <person name="Beausoleil S.A."/>
            <person name="Villen J."/>
            <person name="Haas W."/>
            <person name="Sowa M.E."/>
            <person name="Gygi S.P."/>
        </authorList>
    </citation>
    <scope>IDENTIFICATION BY MASS SPECTROMETRY [LARGE SCALE ANALYSIS]</scope>
    <source>
        <tissue>Brain</tissue>
    </source>
</reference>
<reference key="3">
    <citation type="journal article" date="2014" name="Mol. Cell. Proteomics">
        <title>Immunoaffinity enrichment and mass spectrometry analysis of protein methylation.</title>
        <authorList>
            <person name="Guo A."/>
            <person name="Gu H."/>
            <person name="Zhou J."/>
            <person name="Mulhern D."/>
            <person name="Wang Y."/>
            <person name="Lee K.A."/>
            <person name="Yang V."/>
            <person name="Aguiar M."/>
            <person name="Kornhauser J."/>
            <person name="Jia X."/>
            <person name="Ren J."/>
            <person name="Beausoleil S.A."/>
            <person name="Silva J.C."/>
            <person name="Vemulapalli V."/>
            <person name="Bedford M.T."/>
            <person name="Comb M.J."/>
        </authorList>
    </citation>
    <scope>METHYLATION [LARGE SCALE ANALYSIS] AT ARG-37</scope>
    <scope>IDENTIFICATION BY MASS SPECTROMETRY [LARGE SCALE ANALYSIS]</scope>
    <source>
        <tissue>Embryo</tissue>
    </source>
</reference>
<proteinExistence type="evidence at protein level"/>
<name>WIPF2_MOUSE</name>
<evidence type="ECO:0000250" key="1"/>
<evidence type="ECO:0000255" key="2"/>
<evidence type="ECO:0000255" key="3">
    <source>
        <dbReference type="PROSITE-ProRule" id="PRU00406"/>
    </source>
</evidence>
<evidence type="ECO:0000256" key="4">
    <source>
        <dbReference type="SAM" id="MobiDB-lite"/>
    </source>
</evidence>
<evidence type="ECO:0000305" key="5"/>
<evidence type="ECO:0007744" key="6">
    <source>
    </source>
</evidence>
<organism>
    <name type="scientific">Mus musculus</name>
    <name type="common">Mouse</name>
    <dbReference type="NCBI Taxonomy" id="10090"/>
    <lineage>
        <taxon>Eukaryota</taxon>
        <taxon>Metazoa</taxon>
        <taxon>Chordata</taxon>
        <taxon>Craniata</taxon>
        <taxon>Vertebrata</taxon>
        <taxon>Euteleostomi</taxon>
        <taxon>Mammalia</taxon>
        <taxon>Eutheria</taxon>
        <taxon>Euarchontoglires</taxon>
        <taxon>Glires</taxon>
        <taxon>Rodentia</taxon>
        <taxon>Myomorpha</taxon>
        <taxon>Muroidea</taxon>
        <taxon>Muridae</taxon>
        <taxon>Murinae</taxon>
        <taxon>Mus</taxon>
        <taxon>Mus</taxon>
    </lineage>
</organism>
<sequence>MPIPPPPPPPPGPPPPPTFNQANTEQPKLSRDEQRNRGALLQDICKGTKLKKVTNVNDRSAPVIEKPRGSSGGYGPGAAALQPKGGLFQGGVPKLRPVGAKDASEAPAGKPALQVPSSRAAAPRPPGSAASGRPHDDTDSNRASLPELPRMQRPSLPDLSRPNTASGTGMKHSSSAPPPPPPGRRANAPPTPLPLHSNKAQAYNREKPLPPTPGQRLHPGREGHPAPPPVKPPPSPVNIRTGPSGQSLAPPPPPYRQPPGVPNGPSSPTNESAPELPQRHNSLHRKTPGPVRGLAPPPPTSATPSLLSNRPPPPAREPPSRGAAPPPPPPMIRNGARDAPPPPPPYRMHGSEPPSRGKPPPPPSRTPAGPPPPPPPPLRNGHRDSITTVRSFLDDFESKYSFHPVEDFPAPEEYKHLQRVYPSKTNRAARGAPPLPPILR</sequence>
<gene>
    <name type="primary">Wipf2</name>
    <name type="synonym">Wire</name>
</gene>
<dbReference type="EMBL" id="BC057854">
    <property type="protein sequence ID" value="AAH57854.1"/>
    <property type="molecule type" value="mRNA"/>
</dbReference>
<dbReference type="CCDS" id="CCDS25366.1"/>
<dbReference type="RefSeq" id="NP_922922.1">
    <property type="nucleotide sequence ID" value="NM_197940.2"/>
</dbReference>
<dbReference type="RefSeq" id="XP_006534119.1">
    <property type="nucleotide sequence ID" value="XM_006534056.3"/>
</dbReference>
<dbReference type="RefSeq" id="XP_006534120.1">
    <property type="nucleotide sequence ID" value="XM_006534057.3"/>
</dbReference>
<dbReference type="RefSeq" id="XP_006534121.1">
    <property type="nucleotide sequence ID" value="XM_006534058.2"/>
</dbReference>
<dbReference type="RefSeq" id="XP_006534122.1">
    <property type="nucleotide sequence ID" value="XM_006534059.3"/>
</dbReference>
<dbReference type="SMR" id="Q6PEV3"/>
<dbReference type="BioGRID" id="212907">
    <property type="interactions" value="7"/>
</dbReference>
<dbReference type="FunCoup" id="Q6PEV3">
    <property type="interactions" value="2588"/>
</dbReference>
<dbReference type="STRING" id="10090.ENSMUSP00000046991"/>
<dbReference type="GlyGen" id="Q6PEV3">
    <property type="glycosylation" value="5 sites, 1 O-linked glycan (2 sites)"/>
</dbReference>
<dbReference type="iPTMnet" id="Q6PEV3"/>
<dbReference type="PhosphoSitePlus" id="Q6PEV3"/>
<dbReference type="jPOST" id="Q6PEV3"/>
<dbReference type="PaxDb" id="10090-ENSMUSP00000046991"/>
<dbReference type="PeptideAtlas" id="Q6PEV3"/>
<dbReference type="ProteomicsDB" id="299980"/>
<dbReference type="Pumba" id="Q6PEV3"/>
<dbReference type="Antibodypedia" id="16452">
    <property type="antibodies" value="154 antibodies from 26 providers"/>
</dbReference>
<dbReference type="DNASU" id="68524"/>
<dbReference type="Ensembl" id="ENSMUST00000037480.9">
    <property type="protein sequence ID" value="ENSMUSP00000046991.9"/>
    <property type="gene ID" value="ENSMUSG00000038013.15"/>
</dbReference>
<dbReference type="GeneID" id="68524"/>
<dbReference type="KEGG" id="mmu:68524"/>
<dbReference type="UCSC" id="uc007lht.2">
    <property type="organism name" value="mouse"/>
</dbReference>
<dbReference type="AGR" id="MGI:1924462"/>
<dbReference type="CTD" id="147179"/>
<dbReference type="MGI" id="MGI:1924462">
    <property type="gene designation" value="Wipf2"/>
</dbReference>
<dbReference type="VEuPathDB" id="HostDB:ENSMUSG00000038013"/>
<dbReference type="eggNOG" id="KOG4462">
    <property type="taxonomic scope" value="Eukaryota"/>
</dbReference>
<dbReference type="GeneTree" id="ENSGT00940000155557"/>
<dbReference type="HOGENOM" id="CLU_039513_0_0_1"/>
<dbReference type="InParanoid" id="Q6PEV3"/>
<dbReference type="OMA" id="QWQHNAT"/>
<dbReference type="OrthoDB" id="5877983at2759"/>
<dbReference type="PhylomeDB" id="Q6PEV3"/>
<dbReference type="TreeFam" id="TF332135"/>
<dbReference type="BioGRID-ORCS" id="68524">
    <property type="hits" value="4 hits in 76 CRISPR screens"/>
</dbReference>
<dbReference type="CD-CODE" id="CE726F99">
    <property type="entry name" value="Postsynaptic density"/>
</dbReference>
<dbReference type="ChiTaRS" id="Wipf2">
    <property type="organism name" value="mouse"/>
</dbReference>
<dbReference type="PRO" id="PR:Q6PEV3"/>
<dbReference type="Proteomes" id="UP000000589">
    <property type="component" value="Chromosome 11"/>
</dbReference>
<dbReference type="RNAct" id="Q6PEV3">
    <property type="molecule type" value="protein"/>
</dbReference>
<dbReference type="Bgee" id="ENSMUSG00000038013">
    <property type="expression patterns" value="Expressed in urinary bladder urothelium and 209 other cell types or tissues"/>
</dbReference>
<dbReference type="ExpressionAtlas" id="Q6PEV3">
    <property type="expression patterns" value="baseline and differential"/>
</dbReference>
<dbReference type="GO" id="GO:0005737">
    <property type="term" value="C:cytoplasm"/>
    <property type="evidence" value="ECO:0007669"/>
    <property type="project" value="UniProtKB-KW"/>
</dbReference>
<dbReference type="GO" id="GO:0005856">
    <property type="term" value="C:cytoskeleton"/>
    <property type="evidence" value="ECO:0007669"/>
    <property type="project" value="UniProtKB-SubCell"/>
</dbReference>
<dbReference type="GO" id="GO:0003779">
    <property type="term" value="F:actin binding"/>
    <property type="evidence" value="ECO:0007669"/>
    <property type="project" value="UniProtKB-KW"/>
</dbReference>
<dbReference type="InterPro" id="IPR003124">
    <property type="entry name" value="WH2_dom"/>
</dbReference>
<dbReference type="Pfam" id="PF02205">
    <property type="entry name" value="WH2"/>
    <property type="match status" value="1"/>
</dbReference>
<dbReference type="SMART" id="SM00246">
    <property type="entry name" value="WH2"/>
    <property type="match status" value="1"/>
</dbReference>
<dbReference type="PROSITE" id="PS51082">
    <property type="entry name" value="WH2"/>
    <property type="match status" value="1"/>
</dbReference>
<protein>
    <recommendedName>
        <fullName>WAS/WASL-interacting protein family member 2</fullName>
    </recommendedName>
    <alternativeName>
        <fullName>WASP-interacting protein-related protein</fullName>
    </alternativeName>
    <alternativeName>
        <fullName>WIP-related protein</fullName>
    </alternativeName>
</protein>
<feature type="chain" id="PRO_0000065976" description="WAS/WASL-interacting protein family member 2">
    <location>
        <begin position="1"/>
        <end position="440"/>
    </location>
</feature>
<feature type="domain" description="WH2" evidence="3">
    <location>
        <begin position="36"/>
        <end position="53"/>
    </location>
</feature>
<feature type="region of interest" description="Disordered" evidence="4">
    <location>
        <begin position="1"/>
        <end position="38"/>
    </location>
</feature>
<feature type="region of interest" description="Binds actin" evidence="2">
    <location>
        <begin position="49"/>
        <end position="52"/>
    </location>
</feature>
<feature type="region of interest" description="Disordered" evidence="4">
    <location>
        <begin position="56"/>
        <end position="386"/>
    </location>
</feature>
<feature type="region of interest" description="Disordered" evidence="4">
    <location>
        <begin position="419"/>
        <end position="440"/>
    </location>
</feature>
<feature type="compositionally biased region" description="Pro residues" evidence="4">
    <location>
        <begin position="1"/>
        <end position="18"/>
    </location>
</feature>
<feature type="compositionally biased region" description="Low complexity" evidence="4">
    <location>
        <begin position="116"/>
        <end position="132"/>
    </location>
</feature>
<feature type="compositionally biased region" description="Pro residues" evidence="4">
    <location>
        <begin position="176"/>
        <end position="193"/>
    </location>
</feature>
<feature type="compositionally biased region" description="Pro residues" evidence="4">
    <location>
        <begin position="225"/>
        <end position="236"/>
    </location>
</feature>
<feature type="compositionally biased region" description="Pro residues" evidence="4">
    <location>
        <begin position="249"/>
        <end position="262"/>
    </location>
</feature>
<feature type="compositionally biased region" description="Pro residues" evidence="4">
    <location>
        <begin position="356"/>
        <end position="378"/>
    </location>
</feature>
<feature type="modified residue" description="Asymmetric dimethylarginine" evidence="6">
    <location>
        <position position="37"/>
    </location>
</feature>
<accession>Q6PEV3</accession>
<comment type="function">
    <text evidence="1">Plays an active role in the formation of cell surface protrusions downstream of activated PDGFB receptors. Plays an important role in actin-microspike formation through cooperation with WASL. May cooperate with WASP and WASL to induce mobilization and reorganization of the actin filament system (By similarity).</text>
</comment>
<comment type="subunit">
    <text evidence="1">Interacts with WASL and WASP, and this interaction results in cytoplasmic relocation of these two proteins along actin filaments. Interacts with NCK2 resulting in the localization to sites of focal adhesions (By similarity).</text>
</comment>
<comment type="subcellular location">
    <subcellularLocation>
        <location evidence="1">Cytoplasm</location>
        <location evidence="1">Cytoskeleton</location>
    </subcellularLocation>
    <text evidence="1">Localized to stress fibers and bundles of actin filaments.</text>
</comment>
<comment type="similarity">
    <text evidence="5">Belongs to the verprolin family.</text>
</comment>